<proteinExistence type="inferred from homology"/>
<evidence type="ECO:0000255" key="1">
    <source>
        <dbReference type="HAMAP-Rule" id="MF_01368"/>
    </source>
</evidence>
<evidence type="ECO:0000305" key="2"/>
<feature type="chain" id="PRO_1000055981" description="Large ribosomal subunit protein bL17">
    <location>
        <begin position="1"/>
        <end position="113"/>
    </location>
</feature>
<accession>Q0AUL0</accession>
<name>RL17_SYNWW</name>
<dbReference type="EMBL" id="CP000448">
    <property type="protein sequence ID" value="ABI69594.1"/>
    <property type="molecule type" value="Genomic_DNA"/>
</dbReference>
<dbReference type="RefSeq" id="WP_011641678.1">
    <property type="nucleotide sequence ID" value="NC_008346.1"/>
</dbReference>
<dbReference type="SMR" id="Q0AUL0"/>
<dbReference type="STRING" id="335541.Swol_2303"/>
<dbReference type="KEGG" id="swo:Swol_2303"/>
<dbReference type="eggNOG" id="COG0203">
    <property type="taxonomic scope" value="Bacteria"/>
</dbReference>
<dbReference type="HOGENOM" id="CLU_074407_2_2_9"/>
<dbReference type="OrthoDB" id="9809073at2"/>
<dbReference type="Proteomes" id="UP000001968">
    <property type="component" value="Chromosome"/>
</dbReference>
<dbReference type="GO" id="GO:0022625">
    <property type="term" value="C:cytosolic large ribosomal subunit"/>
    <property type="evidence" value="ECO:0007669"/>
    <property type="project" value="TreeGrafter"/>
</dbReference>
<dbReference type="GO" id="GO:0003735">
    <property type="term" value="F:structural constituent of ribosome"/>
    <property type="evidence" value="ECO:0007669"/>
    <property type="project" value="InterPro"/>
</dbReference>
<dbReference type="GO" id="GO:0006412">
    <property type="term" value="P:translation"/>
    <property type="evidence" value="ECO:0007669"/>
    <property type="project" value="UniProtKB-UniRule"/>
</dbReference>
<dbReference type="Gene3D" id="3.90.1030.10">
    <property type="entry name" value="Ribosomal protein L17"/>
    <property type="match status" value="1"/>
</dbReference>
<dbReference type="HAMAP" id="MF_01368">
    <property type="entry name" value="Ribosomal_bL17"/>
    <property type="match status" value="1"/>
</dbReference>
<dbReference type="InterPro" id="IPR000456">
    <property type="entry name" value="Ribosomal_bL17"/>
</dbReference>
<dbReference type="InterPro" id="IPR047859">
    <property type="entry name" value="Ribosomal_bL17_CS"/>
</dbReference>
<dbReference type="InterPro" id="IPR036373">
    <property type="entry name" value="Ribosomal_bL17_sf"/>
</dbReference>
<dbReference type="NCBIfam" id="TIGR00059">
    <property type="entry name" value="L17"/>
    <property type="match status" value="1"/>
</dbReference>
<dbReference type="PANTHER" id="PTHR14413:SF16">
    <property type="entry name" value="LARGE RIBOSOMAL SUBUNIT PROTEIN BL17M"/>
    <property type="match status" value="1"/>
</dbReference>
<dbReference type="PANTHER" id="PTHR14413">
    <property type="entry name" value="RIBOSOMAL PROTEIN L17"/>
    <property type="match status" value="1"/>
</dbReference>
<dbReference type="Pfam" id="PF01196">
    <property type="entry name" value="Ribosomal_L17"/>
    <property type="match status" value="1"/>
</dbReference>
<dbReference type="SUPFAM" id="SSF64263">
    <property type="entry name" value="Prokaryotic ribosomal protein L17"/>
    <property type="match status" value="1"/>
</dbReference>
<dbReference type="PROSITE" id="PS01167">
    <property type="entry name" value="RIBOSOMAL_L17"/>
    <property type="match status" value="1"/>
</dbReference>
<gene>
    <name evidence="1" type="primary">rplQ</name>
    <name type="ordered locus">Swol_2303</name>
</gene>
<reference key="1">
    <citation type="journal article" date="2010" name="Environ. Microbiol.">
        <title>The genome of Syntrophomonas wolfei: new insights into syntrophic metabolism and biohydrogen production.</title>
        <authorList>
            <person name="Sieber J.R."/>
            <person name="Sims D.R."/>
            <person name="Han C."/>
            <person name="Kim E."/>
            <person name="Lykidis A."/>
            <person name="Lapidus A.L."/>
            <person name="McDonnald E."/>
            <person name="Rohlin L."/>
            <person name="Culley D.E."/>
            <person name="Gunsalus R."/>
            <person name="McInerney M.J."/>
        </authorList>
    </citation>
    <scope>NUCLEOTIDE SEQUENCE [LARGE SCALE GENOMIC DNA]</scope>
    <source>
        <strain>DSM 2245B / Goettingen</strain>
    </source>
</reference>
<organism>
    <name type="scientific">Syntrophomonas wolfei subsp. wolfei (strain DSM 2245B / Goettingen)</name>
    <dbReference type="NCBI Taxonomy" id="335541"/>
    <lineage>
        <taxon>Bacteria</taxon>
        <taxon>Bacillati</taxon>
        <taxon>Bacillota</taxon>
        <taxon>Clostridia</taxon>
        <taxon>Eubacteriales</taxon>
        <taxon>Syntrophomonadaceae</taxon>
        <taxon>Syntrophomonas</taxon>
    </lineage>
</organism>
<keyword id="KW-1185">Reference proteome</keyword>
<keyword id="KW-0687">Ribonucleoprotein</keyword>
<keyword id="KW-0689">Ribosomal protein</keyword>
<sequence length="113" mass="13004">MSYRRLGLRSDHRRSVLRNSVTSLLKEEKISTTETRAKEIKRLTEKMITLGKRGDLHARRQAAAYIMSDEVVQKLFSDIAARYEERNGGYTRLVKTGYRKGDGAPMVMIELVE</sequence>
<protein>
    <recommendedName>
        <fullName evidence="1">Large ribosomal subunit protein bL17</fullName>
    </recommendedName>
    <alternativeName>
        <fullName evidence="2">50S ribosomal protein L17</fullName>
    </alternativeName>
</protein>
<comment type="subunit">
    <text evidence="1">Part of the 50S ribosomal subunit. Contacts protein L32.</text>
</comment>
<comment type="similarity">
    <text evidence="1">Belongs to the bacterial ribosomal protein bL17 family.</text>
</comment>